<accession>O88593</accession>
<accession>Q62185</accession>
<name>PGRP1_MOUSE</name>
<sequence>MLFACALLALLGLATSCSFIVPRSEWRALPSECSSRLGHPVRYVVISHTAGSFCNSPDSCEQQARNVQHYHKNELGWCDVAYNFLIGEDGHVYEGRGWNIKGDHTGPIWNPMSIGITFMGNFMDRVPAKRALRAALNLLECGVSRGFLRSNYEVKGHRDVQSTLSPGDQLYQVIQSWEHYRE</sequence>
<feature type="signal peptide" evidence="3">
    <location>
        <begin position="1"/>
        <end position="18"/>
    </location>
</feature>
<feature type="chain" id="PRO_0000023902" description="Peptidoglycan recognition protein 1">
    <location>
        <begin position="19"/>
        <end position="182"/>
    </location>
</feature>
<feature type="domain" description="N-acetylmuramoyl-L-alanine amidase" evidence="3">
    <location>
        <begin position="39"/>
        <end position="167"/>
    </location>
</feature>
<feature type="disulfide bond" evidence="1">
    <location>
        <begin position="17"/>
        <end position="141"/>
    </location>
</feature>
<feature type="disulfide bond" evidence="1">
    <location>
        <begin position="33"/>
        <end position="78"/>
    </location>
</feature>
<feature type="disulfide bond" evidence="1">
    <location>
        <begin position="54"/>
        <end position="60"/>
    </location>
</feature>
<feature type="sequence conflict" description="In Ref. 2; CAA60133." evidence="8" ref="2">
    <original>C</original>
    <variation>S</variation>
    <location>
        <position position="141"/>
    </location>
</feature>
<organism>
    <name type="scientific">Mus musculus</name>
    <name type="common">Mouse</name>
    <dbReference type="NCBI Taxonomy" id="10090"/>
    <lineage>
        <taxon>Eukaryota</taxon>
        <taxon>Metazoa</taxon>
        <taxon>Chordata</taxon>
        <taxon>Craniata</taxon>
        <taxon>Vertebrata</taxon>
        <taxon>Euteleostomi</taxon>
        <taxon>Mammalia</taxon>
        <taxon>Eutheria</taxon>
        <taxon>Euarchontoglires</taxon>
        <taxon>Glires</taxon>
        <taxon>Rodentia</taxon>
        <taxon>Myomorpha</taxon>
        <taxon>Muroidea</taxon>
        <taxon>Muridae</taxon>
        <taxon>Murinae</taxon>
        <taxon>Mus</taxon>
        <taxon>Mus</taxon>
    </lineage>
</organism>
<keyword id="KW-0044">Antibiotic</keyword>
<keyword id="KW-0929">Antimicrobial</keyword>
<keyword id="KW-0053">Apoptosis</keyword>
<keyword id="KW-0202">Cytokine</keyword>
<keyword id="KW-0963">Cytoplasm</keyword>
<keyword id="KW-1015">Disulfide bond</keyword>
<keyword id="KW-0391">Immunity</keyword>
<keyword id="KW-0399">Innate immunity</keyword>
<keyword id="KW-1185">Reference proteome</keyword>
<keyword id="KW-0964">Secreted</keyword>
<keyword id="KW-0732">Signal</keyword>
<comment type="function">
    <text evidence="2 4 5 6 7">Innate immunity protein that plays several important functions in antimicrobial and antitumor defense systems. Acts as a pattern receptor that binds to murein peptidoglycans (PGN) of Gram-positive bacteria and thus provides bactericidal activity (PubMed:12649138, PubMed:9660837, PubMed:9707603). Forms an equimolar complex with heat shock protein HSPA1A and induces programmed cell death through apoptosis and necroptosis in tumor cell lines by activating the TNFR1 receptor on the target cell membrane (PubMed:14585845). In addition, acts in complex with the Ca(2+)-binding protein S100A4 as a chemoattractant able to induce lymphocyte movement. Mechanistically, this complex acts as a ligand of the chemotactic receptors CCR5 and CXCR3 which are present on the cells of the immune system. Also promotes the activation of lymphocytes that become able to kill virus-infected cells as well as tumor cells by modulating the spectrum of their target-cell specificity. Induction of cytotoxicity on monocyte surface requires interaction with TREM1 receptor (By similarity).</text>
</comment>
<comment type="subunit">
    <text evidence="5">Homodimer; disulfide-linked. Interacts with HSPA1A; this interaction forms a cytotoxic complex that is released by lymphokine-activated killer cells (PubMed:14585845). Interacts with HSPBP1; this interaction blocks the cytotoxic activity of the PGLYRP1-HSPA1A complex (PubMed:14585845).</text>
</comment>
<comment type="subcellular location">
    <subcellularLocation>
        <location evidence="6">Cytoplasm</location>
    </subcellularLocation>
    <subcellularLocation>
        <location evidence="5 6">Secreted</location>
    </subcellularLocation>
    <text>Exists in both soluble and membrane-associated forms.</text>
</comment>
<comment type="tissue specificity">
    <text evidence="7">Strongly expressed in spleen and lung. Also detected in brain and thymus. In the lung, expressed in the intraalveolar space, in the brain, expressed in the Purkinje cells of the cerebellum and in certain layers of neurons in the hippocampus. Also detected in cells filling the space within the intestinal villus.</text>
</comment>
<comment type="similarity">
    <text evidence="8">Belongs to the N-acetylmuramoyl-L-alanine amidase 2 family.</text>
</comment>
<comment type="sequence caution" evidence="8">
    <conflict type="frameshift">
        <sequence resource="EMBL-CDS" id="CAA60133"/>
    </conflict>
</comment>
<reference key="1">
    <citation type="journal article" date="1998" name="Proc. Natl. Acad. Sci. U.S.A.">
        <title>A peptidoglycan recognition protein in innate immunity conserved from insects to humans.</title>
        <authorList>
            <person name="Kang D."/>
            <person name="Liu G."/>
            <person name="Lundstroem A."/>
            <person name="Gelius E."/>
            <person name="Steiner H."/>
        </authorList>
    </citation>
    <scope>NUCLEOTIDE SEQUENCE [MRNA]</scope>
    <scope>FUNCTION</scope>
    <scope>TISSUE SPECIFICITY</scope>
    <source>
        <tissue>Spleen</tissue>
    </source>
</reference>
<reference key="2">
    <citation type="journal article" date="1998" name="J. Biol. Chem.">
        <title>Molecular cloning and characterization of the mouse tag7 gene encoding a novel cytokine.</title>
        <authorList>
            <person name="Kiselev S.L."/>
            <person name="Kustikova O.S."/>
            <person name="Korobko E.V."/>
            <person name="Prokhortchouk E.B."/>
            <person name="Kabishev A.A."/>
            <person name="Lukanidin E.M."/>
            <person name="Georgiev G.P."/>
        </authorList>
    </citation>
    <scope>NUCLEOTIDE SEQUENCE [GENOMIC DNA / MRNA]</scope>
    <scope>FUNCTION</scope>
    <scope>SUBCELLULAR LOCATION</scope>
</reference>
<reference key="3">
    <citation type="submission" date="1999-10" db="EMBL/GenBank/DDBJ databases">
        <title>Granulocyte-colony stimulating factor up-regulates expression of murine tag7 during myeloid differentiation.</title>
        <authorList>
            <person name="Slayton W.B."/>
            <person name="Rigaa A."/>
            <person name="Hancock J.D."/>
            <person name="Zaugg J.K."/>
            <person name="Le T.V."/>
            <person name="Trautman M.S."/>
            <person name="Spangrude G.J."/>
            <person name="Carroll W.L."/>
            <person name="Schibler K.R."/>
        </authorList>
    </citation>
    <scope>NUCLEOTIDE SEQUENCE</scope>
</reference>
<reference key="4">
    <citation type="journal article" date="2003" name="Blood">
        <title>Defect in neutrophil killing and increased susceptibility to infection with nonpathogenic Gram-positive bacteria in peptidoglycan recognition protein-S (PGRP-S)-deficient mice.</title>
        <authorList>
            <person name="Dziarski R."/>
            <person name="Platt K.A."/>
            <person name="Gelius E."/>
            <person name="Steiner H."/>
            <person name="Gupta D."/>
        </authorList>
    </citation>
    <scope>NUCLEOTIDE SEQUENCE [GENOMIC DNA]</scope>
    <scope>FUNCTION</scope>
    <source>
        <strain>129/Sv</strain>
    </source>
</reference>
<reference key="5">
    <citation type="journal article" date="2005" name="Science">
        <title>The transcriptional landscape of the mammalian genome.</title>
        <authorList>
            <person name="Carninci P."/>
            <person name="Kasukawa T."/>
            <person name="Katayama S."/>
            <person name="Gough J."/>
            <person name="Frith M.C."/>
            <person name="Maeda N."/>
            <person name="Oyama R."/>
            <person name="Ravasi T."/>
            <person name="Lenhard B."/>
            <person name="Wells C."/>
            <person name="Kodzius R."/>
            <person name="Shimokawa K."/>
            <person name="Bajic V.B."/>
            <person name="Brenner S.E."/>
            <person name="Batalov S."/>
            <person name="Forrest A.R."/>
            <person name="Zavolan M."/>
            <person name="Davis M.J."/>
            <person name="Wilming L.G."/>
            <person name="Aidinis V."/>
            <person name="Allen J.E."/>
            <person name="Ambesi-Impiombato A."/>
            <person name="Apweiler R."/>
            <person name="Aturaliya R.N."/>
            <person name="Bailey T.L."/>
            <person name="Bansal M."/>
            <person name="Baxter L."/>
            <person name="Beisel K.W."/>
            <person name="Bersano T."/>
            <person name="Bono H."/>
            <person name="Chalk A.M."/>
            <person name="Chiu K.P."/>
            <person name="Choudhary V."/>
            <person name="Christoffels A."/>
            <person name="Clutterbuck D.R."/>
            <person name="Crowe M.L."/>
            <person name="Dalla E."/>
            <person name="Dalrymple B.P."/>
            <person name="de Bono B."/>
            <person name="Della Gatta G."/>
            <person name="di Bernardo D."/>
            <person name="Down T."/>
            <person name="Engstrom P."/>
            <person name="Fagiolini M."/>
            <person name="Faulkner G."/>
            <person name="Fletcher C.F."/>
            <person name="Fukushima T."/>
            <person name="Furuno M."/>
            <person name="Futaki S."/>
            <person name="Gariboldi M."/>
            <person name="Georgii-Hemming P."/>
            <person name="Gingeras T.R."/>
            <person name="Gojobori T."/>
            <person name="Green R.E."/>
            <person name="Gustincich S."/>
            <person name="Harbers M."/>
            <person name="Hayashi Y."/>
            <person name="Hensch T.K."/>
            <person name="Hirokawa N."/>
            <person name="Hill D."/>
            <person name="Huminiecki L."/>
            <person name="Iacono M."/>
            <person name="Ikeo K."/>
            <person name="Iwama A."/>
            <person name="Ishikawa T."/>
            <person name="Jakt M."/>
            <person name="Kanapin A."/>
            <person name="Katoh M."/>
            <person name="Kawasawa Y."/>
            <person name="Kelso J."/>
            <person name="Kitamura H."/>
            <person name="Kitano H."/>
            <person name="Kollias G."/>
            <person name="Krishnan S.P."/>
            <person name="Kruger A."/>
            <person name="Kummerfeld S.K."/>
            <person name="Kurochkin I.V."/>
            <person name="Lareau L.F."/>
            <person name="Lazarevic D."/>
            <person name="Lipovich L."/>
            <person name="Liu J."/>
            <person name="Liuni S."/>
            <person name="McWilliam S."/>
            <person name="Madan Babu M."/>
            <person name="Madera M."/>
            <person name="Marchionni L."/>
            <person name="Matsuda H."/>
            <person name="Matsuzawa S."/>
            <person name="Miki H."/>
            <person name="Mignone F."/>
            <person name="Miyake S."/>
            <person name="Morris K."/>
            <person name="Mottagui-Tabar S."/>
            <person name="Mulder N."/>
            <person name="Nakano N."/>
            <person name="Nakauchi H."/>
            <person name="Ng P."/>
            <person name="Nilsson R."/>
            <person name="Nishiguchi S."/>
            <person name="Nishikawa S."/>
            <person name="Nori F."/>
            <person name="Ohara O."/>
            <person name="Okazaki Y."/>
            <person name="Orlando V."/>
            <person name="Pang K.C."/>
            <person name="Pavan W.J."/>
            <person name="Pavesi G."/>
            <person name="Pesole G."/>
            <person name="Petrovsky N."/>
            <person name="Piazza S."/>
            <person name="Reed J."/>
            <person name="Reid J.F."/>
            <person name="Ring B.Z."/>
            <person name="Ringwald M."/>
            <person name="Rost B."/>
            <person name="Ruan Y."/>
            <person name="Salzberg S.L."/>
            <person name="Sandelin A."/>
            <person name="Schneider C."/>
            <person name="Schoenbach C."/>
            <person name="Sekiguchi K."/>
            <person name="Semple C.A."/>
            <person name="Seno S."/>
            <person name="Sessa L."/>
            <person name="Sheng Y."/>
            <person name="Shibata Y."/>
            <person name="Shimada H."/>
            <person name="Shimada K."/>
            <person name="Silva D."/>
            <person name="Sinclair B."/>
            <person name="Sperling S."/>
            <person name="Stupka E."/>
            <person name="Sugiura K."/>
            <person name="Sultana R."/>
            <person name="Takenaka Y."/>
            <person name="Taki K."/>
            <person name="Tammoja K."/>
            <person name="Tan S.L."/>
            <person name="Tang S."/>
            <person name="Taylor M.S."/>
            <person name="Tegner J."/>
            <person name="Teichmann S.A."/>
            <person name="Ueda H.R."/>
            <person name="van Nimwegen E."/>
            <person name="Verardo R."/>
            <person name="Wei C.L."/>
            <person name="Yagi K."/>
            <person name="Yamanishi H."/>
            <person name="Zabarovsky E."/>
            <person name="Zhu S."/>
            <person name="Zimmer A."/>
            <person name="Hide W."/>
            <person name="Bult C."/>
            <person name="Grimmond S.M."/>
            <person name="Teasdale R.D."/>
            <person name="Liu E.T."/>
            <person name="Brusic V."/>
            <person name="Quackenbush J."/>
            <person name="Wahlestedt C."/>
            <person name="Mattick J.S."/>
            <person name="Hume D.A."/>
            <person name="Kai C."/>
            <person name="Sasaki D."/>
            <person name="Tomaru Y."/>
            <person name="Fukuda S."/>
            <person name="Kanamori-Katayama M."/>
            <person name="Suzuki M."/>
            <person name="Aoki J."/>
            <person name="Arakawa T."/>
            <person name="Iida J."/>
            <person name="Imamura K."/>
            <person name="Itoh M."/>
            <person name="Kato T."/>
            <person name="Kawaji H."/>
            <person name="Kawagashira N."/>
            <person name="Kawashima T."/>
            <person name="Kojima M."/>
            <person name="Kondo S."/>
            <person name="Konno H."/>
            <person name="Nakano K."/>
            <person name="Ninomiya N."/>
            <person name="Nishio T."/>
            <person name="Okada M."/>
            <person name="Plessy C."/>
            <person name="Shibata K."/>
            <person name="Shiraki T."/>
            <person name="Suzuki S."/>
            <person name="Tagami M."/>
            <person name="Waki K."/>
            <person name="Watahiki A."/>
            <person name="Okamura-Oho Y."/>
            <person name="Suzuki H."/>
            <person name="Kawai J."/>
            <person name="Hayashizaki Y."/>
        </authorList>
    </citation>
    <scope>NUCLEOTIDE SEQUENCE [LARGE SCALE MRNA]</scope>
    <source>
        <strain>C57BL/6J</strain>
        <tissue>Small intestine</tissue>
    </source>
</reference>
<reference key="6">
    <citation type="journal article" date="2004" name="Genome Res.">
        <title>The status, quality, and expansion of the NIH full-length cDNA project: the Mammalian Gene Collection (MGC).</title>
        <authorList>
            <consortium name="The MGC Project Team"/>
        </authorList>
    </citation>
    <scope>NUCLEOTIDE SEQUENCE [LARGE SCALE MRNA]</scope>
</reference>
<reference key="7">
    <citation type="journal article" date="2004" name="J. Biol. Chem.">
        <title>Peptidoglycan recognition protein tag7 forms a cytotoxic complex with heat shock protein 70 in solution and in lymphocytes.</title>
        <authorList>
            <person name="Sashchenko L.P."/>
            <person name="Dukhanina E.A."/>
            <person name="Yashin D.V."/>
            <person name="Shatalov Y.V."/>
            <person name="Romanova E.A."/>
            <person name="Korobko E.V."/>
            <person name="Demin A.V."/>
            <person name="Lukyanova T.I."/>
            <person name="Kabanova O.D."/>
            <person name="Khaidukov S.V."/>
            <person name="Kiselev S.L."/>
            <person name="Gabibov A.G."/>
            <person name="Gnuchev N.V."/>
            <person name="Georgiev G.P."/>
        </authorList>
    </citation>
    <scope>INTERACTION WITH HSPA1A</scope>
    <scope>SUBCELLULAR LOCATION</scope>
    <scope>FUNCTION</scope>
</reference>
<reference key="8">
    <citation type="journal article" date="2010" name="Cell">
        <title>A tissue-specific atlas of mouse protein phosphorylation and expression.</title>
        <authorList>
            <person name="Huttlin E.L."/>
            <person name="Jedrychowski M.P."/>
            <person name="Elias J.E."/>
            <person name="Goswami T."/>
            <person name="Rad R."/>
            <person name="Beausoleil S.A."/>
            <person name="Villen J."/>
            <person name="Haas W."/>
            <person name="Sowa M.E."/>
            <person name="Gygi S.P."/>
        </authorList>
    </citation>
    <scope>IDENTIFICATION BY MASS SPECTROMETRY [LARGE SCALE ANALYSIS]</scope>
    <source>
        <tissue>Lung</tissue>
        <tissue>Spleen</tissue>
    </source>
</reference>
<dbReference type="EMBL" id="AF076482">
    <property type="protein sequence ID" value="AAC31821.1"/>
    <property type="molecule type" value="mRNA"/>
</dbReference>
<dbReference type="EMBL" id="X86374">
    <property type="protein sequence ID" value="CAA60133.1"/>
    <property type="status" value="ALT_FRAME"/>
    <property type="molecule type" value="mRNA"/>
</dbReference>
<dbReference type="EMBL" id="Y12088">
    <property type="protein sequence ID" value="CAA72803.1"/>
    <property type="molecule type" value="Genomic_DNA"/>
</dbReference>
<dbReference type="EMBL" id="AF193843">
    <property type="protein sequence ID" value="AAF06335.1"/>
    <property type="molecule type" value="mRNA"/>
</dbReference>
<dbReference type="EMBL" id="AY144361">
    <property type="protein sequence ID" value="AAN52146.1"/>
    <property type="molecule type" value="Genomic_DNA"/>
</dbReference>
<dbReference type="EMBL" id="AY144360">
    <property type="protein sequence ID" value="AAN52146.1"/>
    <property type="status" value="JOINED"/>
    <property type="molecule type" value="Genomic_DNA"/>
</dbReference>
<dbReference type="EMBL" id="AK008335">
    <property type="protein sequence ID" value="BAB25611.1"/>
    <property type="molecule type" value="mRNA"/>
</dbReference>
<dbReference type="EMBL" id="BC005582">
    <property type="protein sequence ID" value="AAH05582.1"/>
    <property type="molecule type" value="mRNA"/>
</dbReference>
<dbReference type="CCDS" id="CCDS20881.1"/>
<dbReference type="RefSeq" id="NP_033428.1">
    <property type="nucleotide sequence ID" value="NM_009402.2"/>
</dbReference>
<dbReference type="SMR" id="O88593"/>
<dbReference type="FunCoup" id="O88593">
    <property type="interactions" value="241"/>
</dbReference>
<dbReference type="STRING" id="10090.ENSMUSP00000032573"/>
<dbReference type="PhosphoSitePlus" id="O88593"/>
<dbReference type="jPOST" id="O88593"/>
<dbReference type="PaxDb" id="10090-ENSMUSP00000032573"/>
<dbReference type="PeptideAtlas" id="O88593"/>
<dbReference type="ProteomicsDB" id="288187"/>
<dbReference type="Antibodypedia" id="18065">
    <property type="antibodies" value="373 antibodies from 34 providers"/>
</dbReference>
<dbReference type="DNASU" id="21946"/>
<dbReference type="Ensembl" id="ENSMUST00000032573.8">
    <property type="protein sequence ID" value="ENSMUSP00000032573.7"/>
    <property type="gene ID" value="ENSMUSG00000030413.8"/>
</dbReference>
<dbReference type="GeneID" id="21946"/>
<dbReference type="KEGG" id="mmu:21946"/>
<dbReference type="UCSC" id="uc009fjv.1">
    <property type="organism name" value="mouse"/>
</dbReference>
<dbReference type="AGR" id="MGI:1345092"/>
<dbReference type="CTD" id="8993"/>
<dbReference type="MGI" id="MGI:1345092">
    <property type="gene designation" value="Pglyrp1"/>
</dbReference>
<dbReference type="VEuPathDB" id="HostDB:ENSMUSG00000030413"/>
<dbReference type="eggNOG" id="ENOG502S2KY">
    <property type="taxonomic scope" value="Eukaryota"/>
</dbReference>
<dbReference type="GeneTree" id="ENSGT00940000161006"/>
<dbReference type="HOGENOM" id="CLU_037559_3_2_1"/>
<dbReference type="InParanoid" id="O88593"/>
<dbReference type="OMA" id="CCSPIVP"/>
<dbReference type="OrthoDB" id="10001926at2759"/>
<dbReference type="PhylomeDB" id="O88593"/>
<dbReference type="TreeFam" id="TF323898"/>
<dbReference type="Reactome" id="R-MMU-6798695">
    <property type="pathway name" value="Neutrophil degranulation"/>
</dbReference>
<dbReference type="Reactome" id="R-MMU-6803157">
    <property type="pathway name" value="Antimicrobial peptides"/>
</dbReference>
<dbReference type="BioGRID-ORCS" id="21946">
    <property type="hits" value="4 hits in 77 CRISPR screens"/>
</dbReference>
<dbReference type="PRO" id="PR:O88593"/>
<dbReference type="Proteomes" id="UP000000589">
    <property type="component" value="Chromosome 7"/>
</dbReference>
<dbReference type="RNAct" id="O88593">
    <property type="molecule type" value="protein"/>
</dbReference>
<dbReference type="Bgee" id="ENSMUSG00000030413">
    <property type="expression patterns" value="Expressed in granulocyte and 132 other cell types or tissues"/>
</dbReference>
<dbReference type="ExpressionAtlas" id="O88593">
    <property type="expression patterns" value="baseline and differential"/>
</dbReference>
<dbReference type="GO" id="GO:0005737">
    <property type="term" value="C:cytoplasm"/>
    <property type="evidence" value="ECO:0007669"/>
    <property type="project" value="UniProtKB-SubCell"/>
</dbReference>
<dbReference type="GO" id="GO:0005615">
    <property type="term" value="C:extracellular space"/>
    <property type="evidence" value="ECO:0007669"/>
    <property type="project" value="UniProtKB-KW"/>
</dbReference>
<dbReference type="GO" id="GO:0005125">
    <property type="term" value="F:cytokine activity"/>
    <property type="evidence" value="ECO:0007669"/>
    <property type="project" value="UniProtKB-KW"/>
</dbReference>
<dbReference type="GO" id="GO:0030544">
    <property type="term" value="F:Hsp70 protein binding"/>
    <property type="evidence" value="ECO:0007669"/>
    <property type="project" value="Ensembl"/>
</dbReference>
<dbReference type="GO" id="GO:0060090">
    <property type="term" value="F:molecular adaptor activity"/>
    <property type="evidence" value="ECO:0007669"/>
    <property type="project" value="Ensembl"/>
</dbReference>
<dbReference type="GO" id="GO:0008745">
    <property type="term" value="F:N-acetylmuramoyl-L-alanine amidase activity"/>
    <property type="evidence" value="ECO:0007669"/>
    <property type="project" value="InterPro"/>
</dbReference>
<dbReference type="GO" id="GO:0042834">
    <property type="term" value="F:peptidoglycan binding"/>
    <property type="evidence" value="ECO:0000250"/>
    <property type="project" value="UniProtKB"/>
</dbReference>
<dbReference type="GO" id="GO:0016019">
    <property type="term" value="F:peptidoglycan immune receptor activity"/>
    <property type="evidence" value="ECO:0000266"/>
    <property type="project" value="MGI"/>
</dbReference>
<dbReference type="GO" id="GO:0008270">
    <property type="term" value="F:zinc ion binding"/>
    <property type="evidence" value="ECO:0007669"/>
    <property type="project" value="InterPro"/>
</dbReference>
<dbReference type="GO" id="GO:0061844">
    <property type="term" value="P:antimicrobial humoral immune response mediated by antimicrobial peptide"/>
    <property type="evidence" value="ECO:0007669"/>
    <property type="project" value="Ensembl"/>
</dbReference>
<dbReference type="GO" id="GO:0006915">
    <property type="term" value="P:apoptotic process"/>
    <property type="evidence" value="ECO:0007669"/>
    <property type="project" value="UniProtKB-KW"/>
</dbReference>
<dbReference type="GO" id="GO:0051701">
    <property type="term" value="P:biological process involved in interaction with host"/>
    <property type="evidence" value="ECO:0000315"/>
    <property type="project" value="MGI"/>
</dbReference>
<dbReference type="GO" id="GO:0050830">
    <property type="term" value="P:defense response to Gram-positive bacterium"/>
    <property type="evidence" value="ECO:0007669"/>
    <property type="project" value="Ensembl"/>
</dbReference>
<dbReference type="GO" id="GO:0016045">
    <property type="term" value="P:detection of bacterium"/>
    <property type="evidence" value="ECO:0007669"/>
    <property type="project" value="Ensembl"/>
</dbReference>
<dbReference type="GO" id="GO:0045087">
    <property type="term" value="P:innate immune response"/>
    <property type="evidence" value="ECO:0007669"/>
    <property type="project" value="UniProtKB-KW"/>
</dbReference>
<dbReference type="GO" id="GO:0031640">
    <property type="term" value="P:killing of cells of another organism"/>
    <property type="evidence" value="ECO:0007669"/>
    <property type="project" value="Ensembl"/>
</dbReference>
<dbReference type="GO" id="GO:0050728">
    <property type="term" value="P:negative regulation of inflammatory response"/>
    <property type="evidence" value="ECO:0000315"/>
    <property type="project" value="MGI"/>
</dbReference>
<dbReference type="GO" id="GO:0032827">
    <property type="term" value="P:negative regulation of natural killer cell differentiation involved in immune response"/>
    <property type="evidence" value="ECO:0000315"/>
    <property type="project" value="MGI"/>
</dbReference>
<dbReference type="GO" id="GO:0032689">
    <property type="term" value="P:negative regulation of type II interferon production"/>
    <property type="evidence" value="ECO:0000315"/>
    <property type="project" value="MGI"/>
</dbReference>
<dbReference type="GO" id="GO:0009253">
    <property type="term" value="P:peptidoglycan catabolic process"/>
    <property type="evidence" value="ECO:0007669"/>
    <property type="project" value="InterPro"/>
</dbReference>
<dbReference type="GO" id="GO:0009617">
    <property type="term" value="P:response to bacterium"/>
    <property type="evidence" value="ECO:0000270"/>
    <property type="project" value="MGI"/>
</dbReference>
<dbReference type="CDD" id="cd06583">
    <property type="entry name" value="PGRP"/>
    <property type="match status" value="1"/>
</dbReference>
<dbReference type="FunFam" id="3.40.80.10:FF:000001">
    <property type="entry name" value="Peptidoglycan recognition protein 1"/>
    <property type="match status" value="1"/>
</dbReference>
<dbReference type="Gene3D" id="3.40.80.10">
    <property type="entry name" value="Peptidoglycan recognition protein-like"/>
    <property type="match status" value="1"/>
</dbReference>
<dbReference type="InterPro" id="IPR036505">
    <property type="entry name" value="Amidase/PGRP_sf"/>
</dbReference>
<dbReference type="InterPro" id="IPR002502">
    <property type="entry name" value="Amidase_domain"/>
</dbReference>
<dbReference type="InterPro" id="IPR017331">
    <property type="entry name" value="Peptidoglycan_recognition"/>
</dbReference>
<dbReference type="InterPro" id="IPR015510">
    <property type="entry name" value="PGRP"/>
</dbReference>
<dbReference type="InterPro" id="IPR006619">
    <property type="entry name" value="PGRP_domain_met/bac"/>
</dbReference>
<dbReference type="PANTHER" id="PTHR11022">
    <property type="entry name" value="PEPTIDOGLYCAN RECOGNITION PROTEIN"/>
    <property type="match status" value="1"/>
</dbReference>
<dbReference type="PANTHER" id="PTHR11022:SF58">
    <property type="entry name" value="PEPTIDOGLYCAN RECOGNITION PROTEIN 1"/>
    <property type="match status" value="1"/>
</dbReference>
<dbReference type="Pfam" id="PF01510">
    <property type="entry name" value="Amidase_2"/>
    <property type="match status" value="1"/>
</dbReference>
<dbReference type="PIRSF" id="PIRSF037945">
    <property type="entry name" value="PGRPs"/>
    <property type="match status" value="1"/>
</dbReference>
<dbReference type="SMART" id="SM00644">
    <property type="entry name" value="Ami_2"/>
    <property type="match status" value="1"/>
</dbReference>
<dbReference type="SMART" id="SM00701">
    <property type="entry name" value="PGRP"/>
    <property type="match status" value="1"/>
</dbReference>
<dbReference type="SUPFAM" id="SSF55846">
    <property type="entry name" value="N-acetylmuramoyl-L-alanine amidase-like"/>
    <property type="match status" value="1"/>
</dbReference>
<proteinExistence type="evidence at protein level"/>
<gene>
    <name type="primary">Pglyrp1</name>
    <name type="synonym">Pglyrp</name>
    <name type="synonym">Pgrp</name>
    <name type="synonym">Pgrps</name>
    <name type="synonym">Tag7</name>
</gene>
<evidence type="ECO:0000250" key="1"/>
<evidence type="ECO:0000250" key="2">
    <source>
        <dbReference type="UniProtKB" id="O75594"/>
    </source>
</evidence>
<evidence type="ECO:0000255" key="3"/>
<evidence type="ECO:0000269" key="4">
    <source>
    </source>
</evidence>
<evidence type="ECO:0000269" key="5">
    <source>
    </source>
</evidence>
<evidence type="ECO:0000269" key="6">
    <source>
    </source>
</evidence>
<evidence type="ECO:0000269" key="7">
    <source>
    </source>
</evidence>
<evidence type="ECO:0000305" key="8"/>
<protein>
    <recommendedName>
        <fullName>Peptidoglycan recognition protein 1</fullName>
    </recommendedName>
    <alternativeName>
        <fullName>Cytokine tag7</fullName>
    </alternativeName>
    <alternativeName>
        <fullName>Peptidoglycan recognition protein short</fullName>
        <shortName>PGRP-S</shortName>
    </alternativeName>
</protein>